<name>EAPP_HUMAN</name>
<sequence>MNRLPDDYDPYAVEEPSDEEPALSSSEDEVDVLLHGTPDQKRKLIRECLTGESESSSEDEFEKEMEAELNSTMKTMEDKLSSLGTGSSSGNGKVATAPTRYYDDIYFDSDSEDEDRAVQVTKKKKKKQHKIPTNDELLYDPEKDNRDQAWVDAQRRGYHGLGPQRSRQQQPVPNSDAVLNCPACMTTLCLDCQRHESYKTQYRAMFVMNCSINKEEVLRYKASENRKKRRVHKKMRSNREDAAEKAETDVEEIYHPVMCTECSTEVAVYDKDEVFHFFNVLASHS</sequence>
<gene>
    <name type="primary">EAPP</name>
    <name type="synonym">C14orf11</name>
    <name type="ORF">BM-036</name>
</gene>
<dbReference type="EMBL" id="AY157300">
    <property type="protein sequence ID" value="AAO17041.1"/>
    <property type="status" value="ALT_FRAME"/>
    <property type="molecule type" value="mRNA"/>
</dbReference>
<dbReference type="EMBL" id="AY157301">
    <property type="protein sequence ID" value="AAO17042.1"/>
    <property type="status" value="ALT_FRAME"/>
    <property type="molecule type" value="mRNA"/>
</dbReference>
<dbReference type="EMBL" id="AY869694">
    <property type="protein sequence ID" value="AAX63200.1"/>
    <property type="molecule type" value="mRNA"/>
</dbReference>
<dbReference type="EMBL" id="AF217512">
    <property type="protein sequence ID" value="AAF67623.1"/>
    <property type="status" value="ALT_FRAME"/>
    <property type="molecule type" value="mRNA"/>
</dbReference>
<dbReference type="EMBL" id="AK000585">
    <property type="protein sequence ID" value="BAA91271.1"/>
    <property type="molecule type" value="mRNA"/>
</dbReference>
<dbReference type="EMBL" id="AL445363">
    <property type="status" value="NOT_ANNOTATED_CDS"/>
    <property type="molecule type" value="Genomic_DNA"/>
</dbReference>
<dbReference type="EMBL" id="BC001245">
    <property type="protein sequence ID" value="AAH01245.1"/>
    <property type="molecule type" value="mRNA"/>
</dbReference>
<dbReference type="CCDS" id="CCDS41941.1"/>
<dbReference type="RefSeq" id="NP_001305845.1">
    <property type="nucleotide sequence ID" value="NM_001318916.1"/>
</dbReference>
<dbReference type="RefSeq" id="NP_060923.2">
    <property type="nucleotide sequence ID" value="NM_018453.4"/>
</dbReference>
<dbReference type="BioGRID" id="120941">
    <property type="interactions" value="79"/>
</dbReference>
<dbReference type="FunCoup" id="Q56P03">
    <property type="interactions" value="2739"/>
</dbReference>
<dbReference type="IntAct" id="Q56P03">
    <property type="interactions" value="44"/>
</dbReference>
<dbReference type="STRING" id="9606.ENSP00000250454"/>
<dbReference type="iPTMnet" id="Q56P03"/>
<dbReference type="PhosphoSitePlus" id="Q56P03"/>
<dbReference type="BioMuta" id="EAPP"/>
<dbReference type="DMDM" id="296439474"/>
<dbReference type="jPOST" id="Q56P03"/>
<dbReference type="MassIVE" id="Q56P03"/>
<dbReference type="PaxDb" id="9606-ENSP00000250454"/>
<dbReference type="PeptideAtlas" id="Q56P03"/>
<dbReference type="ProteomicsDB" id="62582"/>
<dbReference type="Pumba" id="Q56P03"/>
<dbReference type="Antibodypedia" id="128">
    <property type="antibodies" value="128 antibodies from 26 providers"/>
</dbReference>
<dbReference type="DNASU" id="55837"/>
<dbReference type="Ensembl" id="ENST00000250454.8">
    <property type="protein sequence ID" value="ENSP00000250454.3"/>
    <property type="gene ID" value="ENSG00000129518.10"/>
</dbReference>
<dbReference type="GeneID" id="55837"/>
<dbReference type="KEGG" id="hsa:55837"/>
<dbReference type="MANE-Select" id="ENST00000250454.8">
    <property type="protein sequence ID" value="ENSP00000250454.3"/>
    <property type="RefSeq nucleotide sequence ID" value="NM_018453.4"/>
    <property type="RefSeq protein sequence ID" value="NP_060923.2"/>
</dbReference>
<dbReference type="UCSC" id="uc001wsd.2">
    <property type="organism name" value="human"/>
</dbReference>
<dbReference type="AGR" id="HGNC:19312"/>
<dbReference type="CTD" id="55837"/>
<dbReference type="DisGeNET" id="55837"/>
<dbReference type="GeneCards" id="EAPP"/>
<dbReference type="HGNC" id="HGNC:19312">
    <property type="gene designation" value="EAPP"/>
</dbReference>
<dbReference type="HPA" id="ENSG00000129518">
    <property type="expression patterns" value="Low tissue specificity"/>
</dbReference>
<dbReference type="MIM" id="609486">
    <property type="type" value="gene"/>
</dbReference>
<dbReference type="neXtProt" id="NX_Q56P03"/>
<dbReference type="OpenTargets" id="ENSG00000129518"/>
<dbReference type="PharmGKB" id="PA162384208"/>
<dbReference type="VEuPathDB" id="HostDB:ENSG00000129518"/>
<dbReference type="eggNOG" id="KOG3395">
    <property type="taxonomic scope" value="Eukaryota"/>
</dbReference>
<dbReference type="GeneTree" id="ENSGT00390000001332"/>
<dbReference type="InParanoid" id="Q56P03"/>
<dbReference type="OMA" id="CFVNKEE"/>
<dbReference type="OrthoDB" id="122464at2759"/>
<dbReference type="PAN-GO" id="Q56P03">
    <property type="GO annotations" value="2 GO annotations based on evolutionary models"/>
</dbReference>
<dbReference type="PhylomeDB" id="Q56P03"/>
<dbReference type="TreeFam" id="TF328497"/>
<dbReference type="PathwayCommons" id="Q56P03"/>
<dbReference type="SignaLink" id="Q56P03"/>
<dbReference type="SIGNOR" id="Q56P03"/>
<dbReference type="BioGRID-ORCS" id="55837">
    <property type="hits" value="276 hits in 1155 CRISPR screens"/>
</dbReference>
<dbReference type="ChiTaRS" id="EAPP">
    <property type="organism name" value="human"/>
</dbReference>
<dbReference type="GeneWiki" id="EAPP"/>
<dbReference type="GenomeRNAi" id="55837"/>
<dbReference type="Pharos" id="Q56P03">
    <property type="development level" value="Tbio"/>
</dbReference>
<dbReference type="PRO" id="PR:Q56P03"/>
<dbReference type="Proteomes" id="UP000005640">
    <property type="component" value="Chromosome 14"/>
</dbReference>
<dbReference type="RNAct" id="Q56P03">
    <property type="molecule type" value="protein"/>
</dbReference>
<dbReference type="Bgee" id="ENSG00000129518">
    <property type="expression patterns" value="Expressed in calcaneal tendon and 210 other cell types or tissues"/>
</dbReference>
<dbReference type="ExpressionAtlas" id="Q56P03">
    <property type="expression patterns" value="baseline and differential"/>
</dbReference>
<dbReference type="GO" id="GO:0005737">
    <property type="term" value="C:cytoplasm"/>
    <property type="evidence" value="ECO:0007669"/>
    <property type="project" value="UniProtKB-SubCell"/>
</dbReference>
<dbReference type="GO" id="GO:0016607">
    <property type="term" value="C:nuclear speck"/>
    <property type="evidence" value="ECO:0000314"/>
    <property type="project" value="HPA"/>
</dbReference>
<dbReference type="GO" id="GO:0005654">
    <property type="term" value="C:nucleoplasm"/>
    <property type="evidence" value="ECO:0000314"/>
    <property type="project" value="HPA"/>
</dbReference>
<dbReference type="GO" id="GO:0005634">
    <property type="term" value="C:nucleus"/>
    <property type="evidence" value="ECO:0000314"/>
    <property type="project" value="MGI"/>
</dbReference>
<dbReference type="GO" id="GO:0034244">
    <property type="term" value="P:negative regulation of transcription elongation by RNA polymerase II"/>
    <property type="evidence" value="ECO:0000314"/>
    <property type="project" value="MGI"/>
</dbReference>
<dbReference type="GO" id="GO:0008284">
    <property type="term" value="P:positive regulation of cell population proliferation"/>
    <property type="evidence" value="ECO:0000314"/>
    <property type="project" value="MGI"/>
</dbReference>
<dbReference type="GO" id="GO:0032968">
    <property type="term" value="P:positive regulation of transcription elongation by RNA polymerase II"/>
    <property type="evidence" value="ECO:0000314"/>
    <property type="project" value="MGI"/>
</dbReference>
<dbReference type="InterPro" id="IPR019370">
    <property type="entry name" value="E2F-assoc_phosphoprotein"/>
</dbReference>
<dbReference type="PANTHER" id="PTHR15967">
    <property type="entry name" value="E2F-ASSOCIATED PHOSPHOPROTEIN"/>
    <property type="match status" value="1"/>
</dbReference>
<dbReference type="PANTHER" id="PTHR15967:SF0">
    <property type="entry name" value="E2F-ASSOCIATED PHOSPHOPROTEIN"/>
    <property type="match status" value="1"/>
</dbReference>
<dbReference type="Pfam" id="PF10238">
    <property type="entry name" value="Eapp_C"/>
    <property type="match status" value="1"/>
</dbReference>
<comment type="function">
    <text evidence="3">May play an important role in the fine-tuning of both major E2F1 activities, the regulation of the cell-cycle and the induction of apoptosis. Promotes S-phase entry, and inhibits p14(ARP) expression.</text>
</comment>
<comment type="subunit">
    <text evidence="3">Interacts with E2F1. The C-terminal half binds the N-terminal of E2F1. Also interacts with E2F2 and E2F3, but not E2F4.</text>
</comment>
<comment type="interaction">
    <interactant intactId="EBI-748732">
        <id>Q56P03</id>
    </interactant>
    <interactant intactId="EBI-748721">
        <id>Q9Y312</id>
        <label>AAR2</label>
    </interactant>
    <organismsDiffer>false</organismsDiffer>
    <experiments>5</experiments>
</comment>
<comment type="interaction">
    <interactant intactId="EBI-748732">
        <id>Q56P03</id>
    </interactant>
    <interactant intactId="EBI-358049">
        <id>Q13895</id>
        <label>BYSL</label>
    </interactant>
    <organismsDiffer>false</organismsDiffer>
    <experiments>3</experiments>
</comment>
<comment type="interaction">
    <interactant intactId="EBI-748732">
        <id>Q56P03</id>
    </interactant>
    <interactant intactId="EBI-1049336">
        <id>O95379</id>
        <label>TNFAIP8</label>
    </interactant>
    <organismsDiffer>false</organismsDiffer>
    <experiments>3</experiments>
</comment>
<comment type="subcellular location">
    <subcellularLocation>
        <location>Cytoplasm</location>
    </subcellularLocation>
    <subcellularLocation>
        <location>Nucleus</location>
    </subcellularLocation>
</comment>
<comment type="tissue specificity">
    <text evidence="3 4">Ubiquitously expressed. Highest levels in heart, placenta, skeletal muscle and pancreas. Lower levels in brain, lung and kidney. In the brain, expressed in all regions with high levels in the cerebellum and cerebral cortex. Expressed in COS1 and transformed skin fibroblasts.</text>
</comment>
<comment type="developmental stage">
    <text>During the cell cycle, expression disappears during mitosis.</text>
</comment>
<comment type="sequence caution" evidence="5">
    <conflict type="frameshift">
        <sequence resource="EMBL-CDS" id="AAF67623"/>
    </conflict>
</comment>
<comment type="sequence caution" evidence="5">
    <conflict type="frameshift">
        <sequence resource="EMBL-CDS" id="AAO17041"/>
    </conflict>
</comment>
<comment type="sequence caution" evidence="5">
    <conflict type="frameshift">
        <sequence resource="EMBL-CDS" id="AAO17042"/>
    </conflict>
</comment>
<feature type="chain" id="PRO_0000086904" description="E2F-associated phosphoprotein">
    <location>
        <begin position="1"/>
        <end position="285"/>
    </location>
</feature>
<feature type="region of interest" description="Disordered" evidence="1">
    <location>
        <begin position="1"/>
        <end position="30"/>
    </location>
</feature>
<feature type="region of interest" description="Disordered" evidence="1">
    <location>
        <begin position="48"/>
        <end position="96"/>
    </location>
</feature>
<feature type="region of interest" description="Disordered" evidence="1">
    <location>
        <begin position="118"/>
        <end position="144"/>
    </location>
</feature>
<feature type="compositionally biased region" description="Acidic residues" evidence="1">
    <location>
        <begin position="15"/>
        <end position="30"/>
    </location>
</feature>
<feature type="compositionally biased region" description="Acidic residues" evidence="1">
    <location>
        <begin position="55"/>
        <end position="67"/>
    </location>
</feature>
<feature type="compositionally biased region" description="Low complexity" evidence="1">
    <location>
        <begin position="81"/>
        <end position="92"/>
    </location>
</feature>
<feature type="compositionally biased region" description="Basic residues" evidence="1">
    <location>
        <begin position="121"/>
        <end position="130"/>
    </location>
</feature>
<feature type="modified residue" description="N-acetylmethionine" evidence="8">
    <location>
        <position position="1"/>
    </location>
</feature>
<feature type="modified residue" description="Phosphoserine" evidence="8">
    <location>
        <position position="17"/>
    </location>
</feature>
<feature type="modified residue" description="Phosphothreonine" evidence="10">
    <location>
        <position position="37"/>
    </location>
</feature>
<feature type="modified residue" description="Phosphoserine" evidence="6 7 8 9 10">
    <location>
        <position position="109"/>
    </location>
</feature>
<feature type="modified residue" description="Phosphoserine" evidence="6 7 8 9 10">
    <location>
        <position position="111"/>
    </location>
</feature>
<feature type="sequence variant" id="VAR_031915" description="In dbSNP:rs17352411." evidence="2 3">
    <original>Q</original>
    <variation>E</variation>
    <location>
        <position position="168"/>
    </location>
</feature>
<feature type="sequence conflict" description="In Ref. 2; AAX63200." evidence="5" ref="2">
    <original>R</original>
    <variation>L</variation>
    <location>
        <position position="3"/>
    </location>
</feature>
<feature type="sequence conflict" description="In Ref. 4; BAA91271." evidence="5" ref="4">
    <original>E</original>
    <variation>G</variation>
    <location>
        <position position="52"/>
    </location>
</feature>
<feature type="sequence conflict" description="In Ref. 2; AAX63200 and 6; AAH01245." evidence="5" ref="2 6">
    <original>R</original>
    <variation>Q</variation>
    <location>
        <position position="239"/>
    </location>
</feature>
<accession>Q56P03</accession>
<accession>Q9BVF4</accession>
<accession>Q9NWV5</accession>
<accession>Q9NZ86</accession>
<protein>
    <recommendedName>
        <fullName>E2F-associated phosphoprotein</fullName>
        <shortName>EAPP</shortName>
    </recommendedName>
</protein>
<keyword id="KW-0007">Acetylation</keyword>
<keyword id="KW-0963">Cytoplasm</keyword>
<keyword id="KW-0539">Nucleus</keyword>
<keyword id="KW-0597">Phosphoprotein</keyword>
<keyword id="KW-1267">Proteomics identification</keyword>
<keyword id="KW-1185">Reference proteome</keyword>
<organism>
    <name type="scientific">Homo sapiens</name>
    <name type="common">Human</name>
    <dbReference type="NCBI Taxonomy" id="9606"/>
    <lineage>
        <taxon>Eukaryota</taxon>
        <taxon>Metazoa</taxon>
        <taxon>Chordata</taxon>
        <taxon>Craniata</taxon>
        <taxon>Vertebrata</taxon>
        <taxon>Euteleostomi</taxon>
        <taxon>Mammalia</taxon>
        <taxon>Eutheria</taxon>
        <taxon>Euarchontoglires</taxon>
        <taxon>Primates</taxon>
        <taxon>Haplorrhini</taxon>
        <taxon>Catarrhini</taxon>
        <taxon>Hominidae</taxon>
        <taxon>Homo</taxon>
    </lineage>
</organism>
<evidence type="ECO:0000256" key="1">
    <source>
        <dbReference type="SAM" id="MobiDB-lite"/>
    </source>
</evidence>
<evidence type="ECO:0000269" key="2">
    <source>
    </source>
</evidence>
<evidence type="ECO:0000269" key="3">
    <source>
    </source>
</evidence>
<evidence type="ECO:0000269" key="4">
    <source>
    </source>
</evidence>
<evidence type="ECO:0000305" key="5"/>
<evidence type="ECO:0007744" key="6">
    <source>
    </source>
</evidence>
<evidence type="ECO:0007744" key="7">
    <source>
    </source>
</evidence>
<evidence type="ECO:0007744" key="8">
    <source>
    </source>
</evidence>
<evidence type="ECO:0007744" key="9">
    <source>
    </source>
</evidence>
<evidence type="ECO:0007744" key="10">
    <source>
    </source>
</evidence>
<reference key="1">
    <citation type="journal article" date="2005" name="Genomics">
        <title>Defining a holoprosencephaly locus on human chromosome 14q13 and characterization of potential candidate genes.</title>
        <authorList>
            <person name="Kamnasaran D."/>
            <person name="Chen C.-P."/>
            <person name="Devriendt K."/>
            <person name="Mehta L."/>
            <person name="Cox D.W."/>
        </authorList>
    </citation>
    <scope>NUCLEOTIDE SEQUENCE [MRNA]</scope>
    <scope>SUBCELLULAR LOCATION</scope>
    <scope>TISSUE SPECIFICITY</scope>
    <source>
        <tissue>Fetal brain</tissue>
    </source>
</reference>
<reference key="2">
    <citation type="journal article" date="2005" name="Mol. Biol. Cell">
        <title>EAPP, a novel E2F binding protein that modulates E2F-dependent transcription.</title>
        <authorList>
            <person name="Novy M."/>
            <person name="Pohn R."/>
            <person name="Andorfer P."/>
            <person name="Novy-Weiland T."/>
            <person name="Galos B."/>
            <person name="Schwarzmayr L."/>
            <person name="Rotheneder H."/>
        </authorList>
    </citation>
    <scope>NUCLEOTIDE SEQUENCE [MRNA]</scope>
    <scope>FUNCTION</scope>
    <scope>PHOSPHORYLATION</scope>
    <scope>SUBCELLULAR LOCATION</scope>
    <scope>TISSUE SPECIFICITY</scope>
    <scope>INTERACTION WITH E2F1; E2F2 AND E2F3</scope>
    <scope>VARIANT GLU-168</scope>
</reference>
<reference key="3">
    <citation type="journal article" date="2000" name="Genome Res.">
        <title>Cloning and functional analysis of cDNAs with open reading frames for 300 previously undefined genes expressed in CD34+ hematopoietic stem/progenitor cells.</title>
        <authorList>
            <person name="Zhang Q.-H."/>
            <person name="Ye M."/>
            <person name="Wu X.-Y."/>
            <person name="Ren S.-X."/>
            <person name="Zhao M."/>
            <person name="Zhao C.-J."/>
            <person name="Fu G."/>
            <person name="Shen Y."/>
            <person name="Fan H.-Y."/>
            <person name="Lu G."/>
            <person name="Zhong M."/>
            <person name="Xu X.-R."/>
            <person name="Han Z.-G."/>
            <person name="Zhang J.-W."/>
            <person name="Tao J."/>
            <person name="Huang Q.-H."/>
            <person name="Zhou J."/>
            <person name="Hu G.-X."/>
            <person name="Gu J."/>
            <person name="Chen S.-J."/>
            <person name="Chen Z."/>
        </authorList>
    </citation>
    <scope>NUCLEOTIDE SEQUENCE [LARGE SCALE MRNA]</scope>
    <source>
        <tissue>Bone marrow</tissue>
    </source>
</reference>
<reference key="4">
    <citation type="journal article" date="2004" name="Nat. Genet.">
        <title>Complete sequencing and characterization of 21,243 full-length human cDNAs.</title>
        <authorList>
            <person name="Ota T."/>
            <person name="Suzuki Y."/>
            <person name="Nishikawa T."/>
            <person name="Otsuki T."/>
            <person name="Sugiyama T."/>
            <person name="Irie R."/>
            <person name="Wakamatsu A."/>
            <person name="Hayashi K."/>
            <person name="Sato H."/>
            <person name="Nagai K."/>
            <person name="Kimura K."/>
            <person name="Makita H."/>
            <person name="Sekine M."/>
            <person name="Obayashi M."/>
            <person name="Nishi T."/>
            <person name="Shibahara T."/>
            <person name="Tanaka T."/>
            <person name="Ishii S."/>
            <person name="Yamamoto J."/>
            <person name="Saito K."/>
            <person name="Kawai Y."/>
            <person name="Isono Y."/>
            <person name="Nakamura Y."/>
            <person name="Nagahari K."/>
            <person name="Murakami K."/>
            <person name="Yasuda T."/>
            <person name="Iwayanagi T."/>
            <person name="Wagatsuma M."/>
            <person name="Shiratori A."/>
            <person name="Sudo H."/>
            <person name="Hosoiri T."/>
            <person name="Kaku Y."/>
            <person name="Kodaira H."/>
            <person name="Kondo H."/>
            <person name="Sugawara M."/>
            <person name="Takahashi M."/>
            <person name="Kanda K."/>
            <person name="Yokoi T."/>
            <person name="Furuya T."/>
            <person name="Kikkawa E."/>
            <person name="Omura Y."/>
            <person name="Abe K."/>
            <person name="Kamihara K."/>
            <person name="Katsuta N."/>
            <person name="Sato K."/>
            <person name="Tanikawa M."/>
            <person name="Yamazaki M."/>
            <person name="Ninomiya K."/>
            <person name="Ishibashi T."/>
            <person name="Yamashita H."/>
            <person name="Murakawa K."/>
            <person name="Fujimori K."/>
            <person name="Tanai H."/>
            <person name="Kimata M."/>
            <person name="Watanabe M."/>
            <person name="Hiraoka S."/>
            <person name="Chiba Y."/>
            <person name="Ishida S."/>
            <person name="Ono Y."/>
            <person name="Takiguchi S."/>
            <person name="Watanabe S."/>
            <person name="Yosida M."/>
            <person name="Hotuta T."/>
            <person name="Kusano J."/>
            <person name="Kanehori K."/>
            <person name="Takahashi-Fujii A."/>
            <person name="Hara H."/>
            <person name="Tanase T.-O."/>
            <person name="Nomura Y."/>
            <person name="Togiya S."/>
            <person name="Komai F."/>
            <person name="Hara R."/>
            <person name="Takeuchi K."/>
            <person name="Arita M."/>
            <person name="Imose N."/>
            <person name="Musashino K."/>
            <person name="Yuuki H."/>
            <person name="Oshima A."/>
            <person name="Sasaki N."/>
            <person name="Aotsuka S."/>
            <person name="Yoshikawa Y."/>
            <person name="Matsunawa H."/>
            <person name="Ichihara T."/>
            <person name="Shiohata N."/>
            <person name="Sano S."/>
            <person name="Moriya S."/>
            <person name="Momiyama H."/>
            <person name="Satoh N."/>
            <person name="Takami S."/>
            <person name="Terashima Y."/>
            <person name="Suzuki O."/>
            <person name="Nakagawa S."/>
            <person name="Senoh A."/>
            <person name="Mizoguchi H."/>
            <person name="Goto Y."/>
            <person name="Shimizu F."/>
            <person name="Wakebe H."/>
            <person name="Hishigaki H."/>
            <person name="Watanabe T."/>
            <person name="Sugiyama A."/>
            <person name="Takemoto M."/>
            <person name="Kawakami B."/>
            <person name="Yamazaki M."/>
            <person name="Watanabe K."/>
            <person name="Kumagai A."/>
            <person name="Itakura S."/>
            <person name="Fukuzumi Y."/>
            <person name="Fujimori Y."/>
            <person name="Komiyama M."/>
            <person name="Tashiro H."/>
            <person name="Tanigami A."/>
            <person name="Fujiwara T."/>
            <person name="Ono T."/>
            <person name="Yamada K."/>
            <person name="Fujii Y."/>
            <person name="Ozaki K."/>
            <person name="Hirao M."/>
            <person name="Ohmori Y."/>
            <person name="Kawabata A."/>
            <person name="Hikiji T."/>
            <person name="Kobatake N."/>
            <person name="Inagaki H."/>
            <person name="Ikema Y."/>
            <person name="Okamoto S."/>
            <person name="Okitani R."/>
            <person name="Kawakami T."/>
            <person name="Noguchi S."/>
            <person name="Itoh T."/>
            <person name="Shigeta K."/>
            <person name="Senba T."/>
            <person name="Matsumura K."/>
            <person name="Nakajima Y."/>
            <person name="Mizuno T."/>
            <person name="Morinaga M."/>
            <person name="Sasaki M."/>
            <person name="Togashi T."/>
            <person name="Oyama M."/>
            <person name="Hata H."/>
            <person name="Watanabe M."/>
            <person name="Komatsu T."/>
            <person name="Mizushima-Sugano J."/>
            <person name="Satoh T."/>
            <person name="Shirai Y."/>
            <person name="Takahashi Y."/>
            <person name="Nakagawa K."/>
            <person name="Okumura K."/>
            <person name="Nagase T."/>
            <person name="Nomura N."/>
            <person name="Kikuchi H."/>
            <person name="Masuho Y."/>
            <person name="Yamashita R."/>
            <person name="Nakai K."/>
            <person name="Yada T."/>
            <person name="Nakamura Y."/>
            <person name="Ohara O."/>
            <person name="Isogai T."/>
            <person name="Sugano S."/>
        </authorList>
    </citation>
    <scope>NUCLEOTIDE SEQUENCE [LARGE SCALE MRNA]</scope>
</reference>
<reference key="5">
    <citation type="journal article" date="2003" name="Nature">
        <title>The DNA sequence and analysis of human chromosome 14.</title>
        <authorList>
            <person name="Heilig R."/>
            <person name="Eckenberg R."/>
            <person name="Petit J.-L."/>
            <person name="Fonknechten N."/>
            <person name="Da Silva C."/>
            <person name="Cattolico L."/>
            <person name="Levy M."/>
            <person name="Barbe V."/>
            <person name="De Berardinis V."/>
            <person name="Ureta-Vidal A."/>
            <person name="Pelletier E."/>
            <person name="Vico V."/>
            <person name="Anthouard V."/>
            <person name="Rowen L."/>
            <person name="Madan A."/>
            <person name="Qin S."/>
            <person name="Sun H."/>
            <person name="Du H."/>
            <person name="Pepin K."/>
            <person name="Artiguenave F."/>
            <person name="Robert C."/>
            <person name="Cruaud C."/>
            <person name="Bruels T."/>
            <person name="Jaillon O."/>
            <person name="Friedlander L."/>
            <person name="Samson G."/>
            <person name="Brottier P."/>
            <person name="Cure S."/>
            <person name="Segurens B."/>
            <person name="Aniere F."/>
            <person name="Samain S."/>
            <person name="Crespeau H."/>
            <person name="Abbasi N."/>
            <person name="Aiach N."/>
            <person name="Boscus D."/>
            <person name="Dickhoff R."/>
            <person name="Dors M."/>
            <person name="Dubois I."/>
            <person name="Friedman C."/>
            <person name="Gouyvenoux M."/>
            <person name="James R."/>
            <person name="Madan A."/>
            <person name="Mairey-Estrada B."/>
            <person name="Mangenot S."/>
            <person name="Martins N."/>
            <person name="Menard M."/>
            <person name="Oztas S."/>
            <person name="Ratcliffe A."/>
            <person name="Shaffer T."/>
            <person name="Trask B."/>
            <person name="Vacherie B."/>
            <person name="Bellemere C."/>
            <person name="Belser C."/>
            <person name="Besnard-Gonnet M."/>
            <person name="Bartol-Mavel D."/>
            <person name="Boutard M."/>
            <person name="Briez-Silla S."/>
            <person name="Combette S."/>
            <person name="Dufosse-Laurent V."/>
            <person name="Ferron C."/>
            <person name="Lechaplais C."/>
            <person name="Louesse C."/>
            <person name="Muselet D."/>
            <person name="Magdelenat G."/>
            <person name="Pateau E."/>
            <person name="Petit E."/>
            <person name="Sirvain-Trukniewicz P."/>
            <person name="Trybou A."/>
            <person name="Vega-Czarny N."/>
            <person name="Bataille E."/>
            <person name="Bluet E."/>
            <person name="Bordelais I."/>
            <person name="Dubois M."/>
            <person name="Dumont C."/>
            <person name="Guerin T."/>
            <person name="Haffray S."/>
            <person name="Hammadi R."/>
            <person name="Muanga J."/>
            <person name="Pellouin V."/>
            <person name="Robert D."/>
            <person name="Wunderle E."/>
            <person name="Gauguet G."/>
            <person name="Roy A."/>
            <person name="Sainte-Marthe L."/>
            <person name="Verdier J."/>
            <person name="Verdier-Discala C."/>
            <person name="Hillier L.W."/>
            <person name="Fulton L."/>
            <person name="McPherson J."/>
            <person name="Matsuda F."/>
            <person name="Wilson R."/>
            <person name="Scarpelli C."/>
            <person name="Gyapay G."/>
            <person name="Wincker P."/>
            <person name="Saurin W."/>
            <person name="Quetier F."/>
            <person name="Waterston R."/>
            <person name="Hood L."/>
            <person name="Weissenbach J."/>
        </authorList>
    </citation>
    <scope>NUCLEOTIDE SEQUENCE [LARGE SCALE GENOMIC DNA]</scope>
</reference>
<reference key="6">
    <citation type="journal article" date="2004" name="Genome Res.">
        <title>The status, quality, and expansion of the NIH full-length cDNA project: the Mammalian Gene Collection (MGC).</title>
        <authorList>
            <consortium name="The MGC Project Team"/>
        </authorList>
    </citation>
    <scope>NUCLEOTIDE SEQUENCE [LARGE SCALE MRNA]</scope>
    <scope>VARIANT GLU-168</scope>
    <source>
        <tissue>Cervix</tissue>
    </source>
</reference>
<reference key="7">
    <citation type="journal article" date="2008" name="Proc. Natl. Acad. Sci. U.S.A.">
        <title>A quantitative atlas of mitotic phosphorylation.</title>
        <authorList>
            <person name="Dephoure N."/>
            <person name="Zhou C."/>
            <person name="Villen J."/>
            <person name="Beausoleil S.A."/>
            <person name="Bakalarski C.E."/>
            <person name="Elledge S.J."/>
            <person name="Gygi S.P."/>
        </authorList>
    </citation>
    <scope>PHOSPHORYLATION [LARGE SCALE ANALYSIS] AT SER-109 AND SER-111</scope>
    <scope>IDENTIFICATION BY MASS SPECTROMETRY [LARGE SCALE ANALYSIS]</scope>
    <source>
        <tissue>Cervix carcinoma</tissue>
    </source>
</reference>
<reference key="8">
    <citation type="journal article" date="2009" name="Sci. Signal.">
        <title>Quantitative phosphoproteomic analysis of T cell receptor signaling reveals system-wide modulation of protein-protein interactions.</title>
        <authorList>
            <person name="Mayya V."/>
            <person name="Lundgren D.H."/>
            <person name="Hwang S.-I."/>
            <person name="Rezaul K."/>
            <person name="Wu L."/>
            <person name="Eng J.K."/>
            <person name="Rodionov V."/>
            <person name="Han D.K."/>
        </authorList>
    </citation>
    <scope>PHOSPHORYLATION [LARGE SCALE ANALYSIS] AT SER-109 AND SER-111</scope>
    <scope>IDENTIFICATION BY MASS SPECTROMETRY [LARGE SCALE ANALYSIS]</scope>
    <source>
        <tissue>Leukemic T-cell</tissue>
    </source>
</reference>
<reference key="9">
    <citation type="journal article" date="2010" name="Sci. Signal.">
        <title>Quantitative phosphoproteomics reveals widespread full phosphorylation site occupancy during mitosis.</title>
        <authorList>
            <person name="Olsen J.V."/>
            <person name="Vermeulen M."/>
            <person name="Santamaria A."/>
            <person name="Kumar C."/>
            <person name="Miller M.L."/>
            <person name="Jensen L.J."/>
            <person name="Gnad F."/>
            <person name="Cox J."/>
            <person name="Jensen T.S."/>
            <person name="Nigg E.A."/>
            <person name="Brunak S."/>
            <person name="Mann M."/>
        </authorList>
    </citation>
    <scope>ACETYLATION [LARGE SCALE ANALYSIS] AT MET-1</scope>
    <scope>PHOSPHORYLATION [LARGE SCALE ANALYSIS] AT SER-17; SER-109 AND SER-111</scope>
    <scope>IDENTIFICATION BY MASS SPECTROMETRY [LARGE SCALE ANALYSIS]</scope>
    <source>
        <tissue>Cervix carcinoma</tissue>
    </source>
</reference>
<reference key="10">
    <citation type="journal article" date="2011" name="Sci. Signal.">
        <title>System-wide temporal characterization of the proteome and phosphoproteome of human embryonic stem cell differentiation.</title>
        <authorList>
            <person name="Rigbolt K.T."/>
            <person name="Prokhorova T.A."/>
            <person name="Akimov V."/>
            <person name="Henningsen J."/>
            <person name="Johansen P.T."/>
            <person name="Kratchmarova I."/>
            <person name="Kassem M."/>
            <person name="Mann M."/>
            <person name="Olsen J.V."/>
            <person name="Blagoev B."/>
        </authorList>
    </citation>
    <scope>PHOSPHORYLATION [LARGE SCALE ANALYSIS] AT SER-109 AND SER-111</scope>
    <scope>IDENTIFICATION BY MASS SPECTROMETRY [LARGE SCALE ANALYSIS]</scope>
</reference>
<reference key="11">
    <citation type="journal article" date="2014" name="J. Proteomics">
        <title>An enzyme assisted RP-RPLC approach for in-depth analysis of human liver phosphoproteome.</title>
        <authorList>
            <person name="Bian Y."/>
            <person name="Song C."/>
            <person name="Cheng K."/>
            <person name="Dong M."/>
            <person name="Wang F."/>
            <person name="Huang J."/>
            <person name="Sun D."/>
            <person name="Wang L."/>
            <person name="Ye M."/>
            <person name="Zou H."/>
        </authorList>
    </citation>
    <scope>PHOSPHORYLATION [LARGE SCALE ANALYSIS] AT THR-37; SER-109 AND SER-111</scope>
    <scope>IDENTIFICATION BY MASS SPECTROMETRY [LARGE SCALE ANALYSIS]</scope>
    <source>
        <tissue>Liver</tissue>
    </source>
</reference>
<proteinExistence type="evidence at protein level"/>